<gene>
    <name type="ordered locus">VCM66_0443</name>
</gene>
<sequence>MAAVWREGDDLLLRLYIQPKASRDSIVGLHGEELKVAITAPPIDGKANAHLSKYLAKLCKVAKGSVVVEKGELGRHKQVRILQPSQIPAEIAALIE</sequence>
<comment type="similarity">
    <text evidence="1">Belongs to the UPF0235 family.</text>
</comment>
<name>Y443_VIBCM</name>
<evidence type="ECO:0000255" key="1">
    <source>
        <dbReference type="HAMAP-Rule" id="MF_00634"/>
    </source>
</evidence>
<dbReference type="EMBL" id="CP001233">
    <property type="protein sequence ID" value="ACP04768.1"/>
    <property type="molecule type" value="Genomic_DNA"/>
</dbReference>
<dbReference type="SMR" id="C3LRX5"/>
<dbReference type="KEGG" id="vcm:VCM66_0443"/>
<dbReference type="HOGENOM" id="CLU_130694_5_0_6"/>
<dbReference type="Proteomes" id="UP000001217">
    <property type="component" value="Chromosome I"/>
</dbReference>
<dbReference type="GO" id="GO:0005737">
    <property type="term" value="C:cytoplasm"/>
    <property type="evidence" value="ECO:0007669"/>
    <property type="project" value="TreeGrafter"/>
</dbReference>
<dbReference type="Gene3D" id="3.30.1200.10">
    <property type="entry name" value="YggU-like"/>
    <property type="match status" value="1"/>
</dbReference>
<dbReference type="HAMAP" id="MF_00634">
    <property type="entry name" value="UPF0235"/>
    <property type="match status" value="1"/>
</dbReference>
<dbReference type="InterPro" id="IPR003746">
    <property type="entry name" value="DUF167"/>
</dbReference>
<dbReference type="InterPro" id="IPR036591">
    <property type="entry name" value="YggU-like_sf"/>
</dbReference>
<dbReference type="NCBIfam" id="TIGR00251">
    <property type="entry name" value="DUF167 family protein"/>
    <property type="match status" value="1"/>
</dbReference>
<dbReference type="NCBIfam" id="NF003466">
    <property type="entry name" value="PRK05090.1"/>
    <property type="match status" value="1"/>
</dbReference>
<dbReference type="PANTHER" id="PTHR13420">
    <property type="entry name" value="UPF0235 PROTEIN C15ORF40"/>
    <property type="match status" value="1"/>
</dbReference>
<dbReference type="PANTHER" id="PTHR13420:SF7">
    <property type="entry name" value="UPF0235 PROTEIN C15ORF40"/>
    <property type="match status" value="1"/>
</dbReference>
<dbReference type="Pfam" id="PF02594">
    <property type="entry name" value="DUF167"/>
    <property type="match status" value="1"/>
</dbReference>
<dbReference type="SMART" id="SM01152">
    <property type="entry name" value="DUF167"/>
    <property type="match status" value="1"/>
</dbReference>
<dbReference type="SUPFAM" id="SSF69786">
    <property type="entry name" value="YggU-like"/>
    <property type="match status" value="1"/>
</dbReference>
<reference key="1">
    <citation type="journal article" date="2008" name="PLoS ONE">
        <title>A recalibrated molecular clock and independent origins for the cholera pandemic clones.</title>
        <authorList>
            <person name="Feng L."/>
            <person name="Reeves P.R."/>
            <person name="Lan R."/>
            <person name="Ren Y."/>
            <person name="Gao C."/>
            <person name="Zhou Z."/>
            <person name="Ren Y."/>
            <person name="Cheng J."/>
            <person name="Wang W."/>
            <person name="Wang J."/>
            <person name="Qian W."/>
            <person name="Li D."/>
            <person name="Wang L."/>
        </authorList>
    </citation>
    <scope>NUCLEOTIDE SEQUENCE [LARGE SCALE GENOMIC DNA]</scope>
    <source>
        <strain>M66-2</strain>
    </source>
</reference>
<feature type="chain" id="PRO_1000147347" description="UPF0235 protein VCM66_0443">
    <location>
        <begin position="1"/>
        <end position="96"/>
    </location>
</feature>
<organism>
    <name type="scientific">Vibrio cholerae serotype O1 (strain M66-2)</name>
    <dbReference type="NCBI Taxonomy" id="579112"/>
    <lineage>
        <taxon>Bacteria</taxon>
        <taxon>Pseudomonadati</taxon>
        <taxon>Pseudomonadota</taxon>
        <taxon>Gammaproteobacteria</taxon>
        <taxon>Vibrionales</taxon>
        <taxon>Vibrionaceae</taxon>
        <taxon>Vibrio</taxon>
    </lineage>
</organism>
<proteinExistence type="inferred from homology"/>
<protein>
    <recommendedName>
        <fullName evidence="1">UPF0235 protein VCM66_0443</fullName>
    </recommendedName>
</protein>
<accession>C3LRX5</accession>